<reference key="1">
    <citation type="journal article" date="2000" name="Nature">
        <title>Sequence and analysis of chromosome 3 of the plant Arabidopsis thaliana.</title>
        <authorList>
            <person name="Salanoubat M."/>
            <person name="Lemcke K."/>
            <person name="Rieger M."/>
            <person name="Ansorge W."/>
            <person name="Unseld M."/>
            <person name="Fartmann B."/>
            <person name="Valle G."/>
            <person name="Bloecker H."/>
            <person name="Perez-Alonso M."/>
            <person name="Obermaier B."/>
            <person name="Delseny M."/>
            <person name="Boutry M."/>
            <person name="Grivell L.A."/>
            <person name="Mache R."/>
            <person name="Puigdomenech P."/>
            <person name="De Simone V."/>
            <person name="Choisne N."/>
            <person name="Artiguenave F."/>
            <person name="Robert C."/>
            <person name="Brottier P."/>
            <person name="Wincker P."/>
            <person name="Cattolico L."/>
            <person name="Weissenbach J."/>
            <person name="Saurin W."/>
            <person name="Quetier F."/>
            <person name="Schaefer M."/>
            <person name="Mueller-Auer S."/>
            <person name="Gabel C."/>
            <person name="Fuchs M."/>
            <person name="Benes V."/>
            <person name="Wurmbach E."/>
            <person name="Drzonek H."/>
            <person name="Erfle H."/>
            <person name="Jordan N."/>
            <person name="Bangert S."/>
            <person name="Wiedelmann R."/>
            <person name="Kranz H."/>
            <person name="Voss H."/>
            <person name="Holland R."/>
            <person name="Brandt P."/>
            <person name="Nyakatura G."/>
            <person name="Vezzi A."/>
            <person name="D'Angelo M."/>
            <person name="Pallavicini A."/>
            <person name="Toppo S."/>
            <person name="Simionati B."/>
            <person name="Conrad A."/>
            <person name="Hornischer K."/>
            <person name="Kauer G."/>
            <person name="Loehnert T.-H."/>
            <person name="Nordsiek G."/>
            <person name="Reichelt J."/>
            <person name="Scharfe M."/>
            <person name="Schoen O."/>
            <person name="Bargues M."/>
            <person name="Terol J."/>
            <person name="Climent J."/>
            <person name="Navarro P."/>
            <person name="Collado C."/>
            <person name="Perez-Perez A."/>
            <person name="Ottenwaelder B."/>
            <person name="Duchemin D."/>
            <person name="Cooke R."/>
            <person name="Laudie M."/>
            <person name="Berger-Llauro C."/>
            <person name="Purnelle B."/>
            <person name="Masuy D."/>
            <person name="de Haan M."/>
            <person name="Maarse A.C."/>
            <person name="Alcaraz J.-P."/>
            <person name="Cottet A."/>
            <person name="Casacuberta E."/>
            <person name="Monfort A."/>
            <person name="Argiriou A."/>
            <person name="Flores M."/>
            <person name="Liguori R."/>
            <person name="Vitale D."/>
            <person name="Mannhaupt G."/>
            <person name="Haase D."/>
            <person name="Schoof H."/>
            <person name="Rudd S."/>
            <person name="Zaccaria P."/>
            <person name="Mewes H.-W."/>
            <person name="Mayer K.F.X."/>
            <person name="Kaul S."/>
            <person name="Town C.D."/>
            <person name="Koo H.L."/>
            <person name="Tallon L.J."/>
            <person name="Jenkins J."/>
            <person name="Rooney T."/>
            <person name="Rizzo M."/>
            <person name="Walts A."/>
            <person name="Utterback T."/>
            <person name="Fujii C.Y."/>
            <person name="Shea T.P."/>
            <person name="Creasy T.H."/>
            <person name="Haas B."/>
            <person name="Maiti R."/>
            <person name="Wu D."/>
            <person name="Peterson J."/>
            <person name="Van Aken S."/>
            <person name="Pai G."/>
            <person name="Militscher J."/>
            <person name="Sellers P."/>
            <person name="Gill J.E."/>
            <person name="Feldblyum T.V."/>
            <person name="Preuss D."/>
            <person name="Lin X."/>
            <person name="Nierman W.C."/>
            <person name="Salzberg S.L."/>
            <person name="White O."/>
            <person name="Venter J.C."/>
            <person name="Fraser C.M."/>
            <person name="Kaneko T."/>
            <person name="Nakamura Y."/>
            <person name="Sato S."/>
            <person name="Kato T."/>
            <person name="Asamizu E."/>
            <person name="Sasamoto S."/>
            <person name="Kimura T."/>
            <person name="Idesawa K."/>
            <person name="Kawashima K."/>
            <person name="Kishida Y."/>
            <person name="Kiyokawa C."/>
            <person name="Kohara M."/>
            <person name="Matsumoto M."/>
            <person name="Matsuno A."/>
            <person name="Muraki A."/>
            <person name="Nakayama S."/>
            <person name="Nakazaki N."/>
            <person name="Shinpo S."/>
            <person name="Takeuchi C."/>
            <person name="Wada T."/>
            <person name="Watanabe A."/>
            <person name="Yamada M."/>
            <person name="Yasuda M."/>
            <person name="Tabata S."/>
        </authorList>
    </citation>
    <scope>NUCLEOTIDE SEQUENCE [LARGE SCALE GENOMIC DNA]</scope>
    <source>
        <strain>cv. Columbia</strain>
    </source>
</reference>
<reference key="2">
    <citation type="journal article" date="2017" name="Plant J.">
        <title>Araport11: a complete reannotation of the Arabidopsis thaliana reference genome.</title>
        <authorList>
            <person name="Cheng C.Y."/>
            <person name="Krishnakumar V."/>
            <person name="Chan A.P."/>
            <person name="Thibaud-Nissen F."/>
            <person name="Schobel S."/>
            <person name="Town C.D."/>
        </authorList>
    </citation>
    <scope>GENOME REANNOTATION</scope>
    <source>
        <strain>cv. Columbia</strain>
    </source>
</reference>
<reference key="3">
    <citation type="journal article" date="2003" name="Science">
        <title>Empirical analysis of transcriptional activity in the Arabidopsis genome.</title>
        <authorList>
            <person name="Yamada K."/>
            <person name="Lim J."/>
            <person name="Dale J.M."/>
            <person name="Chen H."/>
            <person name="Shinn P."/>
            <person name="Palm C.J."/>
            <person name="Southwick A.M."/>
            <person name="Wu H.C."/>
            <person name="Kim C.J."/>
            <person name="Nguyen M."/>
            <person name="Pham P.K."/>
            <person name="Cheuk R.F."/>
            <person name="Karlin-Newmann G."/>
            <person name="Liu S.X."/>
            <person name="Lam B."/>
            <person name="Sakano H."/>
            <person name="Wu T."/>
            <person name="Yu G."/>
            <person name="Miranda M."/>
            <person name="Quach H.L."/>
            <person name="Tripp M."/>
            <person name="Chang C.H."/>
            <person name="Lee J.M."/>
            <person name="Toriumi M.J."/>
            <person name="Chan M.M."/>
            <person name="Tang C.C."/>
            <person name="Onodera C.S."/>
            <person name="Deng J.M."/>
            <person name="Akiyama K."/>
            <person name="Ansari Y."/>
            <person name="Arakawa T."/>
            <person name="Banh J."/>
            <person name="Banno F."/>
            <person name="Bowser L."/>
            <person name="Brooks S.Y."/>
            <person name="Carninci P."/>
            <person name="Chao Q."/>
            <person name="Choy N."/>
            <person name="Enju A."/>
            <person name="Goldsmith A.D."/>
            <person name="Gurjal M."/>
            <person name="Hansen N.F."/>
            <person name="Hayashizaki Y."/>
            <person name="Johnson-Hopson C."/>
            <person name="Hsuan V.W."/>
            <person name="Iida K."/>
            <person name="Karnes M."/>
            <person name="Khan S."/>
            <person name="Koesema E."/>
            <person name="Ishida J."/>
            <person name="Jiang P.X."/>
            <person name="Jones T."/>
            <person name="Kawai J."/>
            <person name="Kamiya A."/>
            <person name="Meyers C."/>
            <person name="Nakajima M."/>
            <person name="Narusaka M."/>
            <person name="Seki M."/>
            <person name="Sakurai T."/>
            <person name="Satou M."/>
            <person name="Tamse R."/>
            <person name="Vaysberg M."/>
            <person name="Wallender E.K."/>
            <person name="Wong C."/>
            <person name="Yamamura Y."/>
            <person name="Yuan S."/>
            <person name="Shinozaki K."/>
            <person name="Davis R.W."/>
            <person name="Theologis A."/>
            <person name="Ecker J.R."/>
        </authorList>
    </citation>
    <scope>NUCLEOTIDE SEQUENCE [LARGE SCALE MRNA]</scope>
    <source>
        <strain>cv. Columbia</strain>
    </source>
</reference>
<reference key="4">
    <citation type="submission" date="2006-07" db="EMBL/GenBank/DDBJ databases">
        <title>Large-scale analysis of RIKEN Arabidopsis full-length (RAFL) cDNAs.</title>
        <authorList>
            <person name="Totoki Y."/>
            <person name="Seki M."/>
            <person name="Ishida J."/>
            <person name="Nakajima M."/>
            <person name="Enju A."/>
            <person name="Kamiya A."/>
            <person name="Narusaka M."/>
            <person name="Shin-i T."/>
            <person name="Nakagawa M."/>
            <person name="Sakamoto N."/>
            <person name="Oishi K."/>
            <person name="Kohara Y."/>
            <person name="Kobayashi M."/>
            <person name="Toyoda A."/>
            <person name="Sakaki Y."/>
            <person name="Sakurai T."/>
            <person name="Iida K."/>
            <person name="Akiyama K."/>
            <person name="Satou M."/>
            <person name="Toyoda T."/>
            <person name="Konagaya A."/>
            <person name="Carninci P."/>
            <person name="Kawai J."/>
            <person name="Hayashizaki Y."/>
            <person name="Shinozaki K."/>
        </authorList>
    </citation>
    <scope>NUCLEOTIDE SEQUENCE [LARGE SCALE MRNA]</scope>
    <source>
        <strain>cv. Columbia</strain>
    </source>
</reference>
<reference key="5">
    <citation type="journal article" date="2016" name="Plant J.">
        <title>Arabidopsis phosphatidylglycerophosphate phosphatase 1 involved in phosphatidylglycerol biosynthesis and photosynthetic function.</title>
        <authorList>
            <person name="Lin Y.-C."/>
            <person name="Kobayashi K."/>
            <person name="Hung C.-H."/>
            <person name="Wada H."/>
            <person name="Nakamura Y."/>
        </authorList>
    </citation>
    <scope>FUNCTION</scope>
    <scope>DISRUPTION PHENOTYPE</scope>
    <scope>CATALYTIC ACTIVITY</scope>
    <scope>TISSUE SPECIFICITY</scope>
    <scope>DEVELOPMENTAL STAGE</scope>
    <scope>SUBCELLULAR LOCATION</scope>
    <scope>PATHWAY</scope>
    <source>
        <strain>cv. Columbia</strain>
    </source>
</reference>
<reference key="6">
    <citation type="journal article" date="2017" name="Plant J.">
        <title>Identification and characterization of a plastidial phosphatidylglycerophosphate phosphatase in Arabidopsis thaliana.</title>
        <authorList>
            <person name="Zhou Y."/>
            <person name="Hoelzl G."/>
            <person name="Vom Dorp K."/>
            <person name="Peisker H."/>
            <person name="Melzer M."/>
            <person name="Frentzen M."/>
            <person name="Doermann P."/>
        </authorList>
    </citation>
    <scope>FUNCTION</scope>
    <scope>DISRUPTION PHENOTYPE</scope>
    <scope>MUTAGENESIS OF ASP-184</scope>
    <scope>SUBCELLULAR LOCATION</scope>
    <scope>TISSUE SPECIFICITY</scope>
    <scope>BIOPHYSICOCHEMICAL PROPERTIES</scope>
    <scope>COFACTOR</scope>
    <scope>PATHWAY</scope>
    <source>
        <strain>cv. Columbia</strain>
    </source>
</reference>
<reference key="7">
    <citation type="journal article" date="2018" name="Biochim. Biophys. Acta">
        <title>Phosphatidylglycerophosphate phosphatase is required for root growth in Arabidopsis.</title>
        <authorList>
            <person name="Lin Y.-C."/>
            <person name="Kobayashi K."/>
            <person name="Wada H."/>
            <person name="Nakamura Y."/>
        </authorList>
    </citation>
    <scope>FUNCTION</scope>
    <scope>DISRUPTION PHENOTYPE</scope>
    <scope>SUBCELLULAR LOCATION</scope>
    <source>
        <strain>cv. Columbia</strain>
    </source>
</reference>
<accession>Q9LXR9</accession>
<accession>A0A178VLA6</accession>
<accession>Q84VV0</accession>
<proteinExistence type="evidence at protein level"/>
<name>PGPP1_ARATH</name>
<organism>
    <name type="scientific">Arabidopsis thaliana</name>
    <name type="common">Mouse-ear cress</name>
    <dbReference type="NCBI Taxonomy" id="3702"/>
    <lineage>
        <taxon>Eukaryota</taxon>
        <taxon>Viridiplantae</taxon>
        <taxon>Streptophyta</taxon>
        <taxon>Embryophyta</taxon>
        <taxon>Tracheophyta</taxon>
        <taxon>Spermatophyta</taxon>
        <taxon>Magnoliopsida</taxon>
        <taxon>eudicotyledons</taxon>
        <taxon>Gunneridae</taxon>
        <taxon>Pentapetalae</taxon>
        <taxon>rosids</taxon>
        <taxon>malvids</taxon>
        <taxon>Brassicales</taxon>
        <taxon>Brassicaceae</taxon>
        <taxon>Camelineae</taxon>
        <taxon>Arabidopsis</taxon>
    </lineage>
</organism>
<comment type="function">
    <text evidence="4 5 6">Phosphatidylglycerophosphate (PGP) phosphatase involved in the biosynthesis of phosphatidylglycerol (PG), a phosphoglycerolipid predominantly present in chloroplastic thylakoid membranes and which has important photosynthetic function; seems to use PGP 34:3, PGP 34:2 and PGP 34:1 as substrates (PubMed:27541283, PubMed:27614107, PubMed:29476828). Required for thylakoid membranes development and chloroplast function (PubMed:27541283, PubMed:27614107). Necessary for normal cell growth (PubMed:27614107). Required for root growth and columella cells organization (PubMed:29476828).</text>
</comment>
<comment type="catalytic activity">
    <reaction evidence="4 5">
        <text>a 1,2-diacyl-sn-glycero-3-phospho-(1'-sn-glycero-3'-phosphate) + H2O = a 1,2-diacyl-sn-glycero-3-phospho-(1'-sn-glycerol) + phosphate</text>
        <dbReference type="Rhea" id="RHEA:33751"/>
        <dbReference type="ChEBI" id="CHEBI:15377"/>
        <dbReference type="ChEBI" id="CHEBI:43474"/>
        <dbReference type="ChEBI" id="CHEBI:60110"/>
        <dbReference type="ChEBI" id="CHEBI:64716"/>
        <dbReference type="EC" id="3.1.3.27"/>
    </reaction>
    <physiologicalReaction direction="left-to-right" evidence="4 5">
        <dbReference type="Rhea" id="RHEA:33752"/>
    </physiologicalReaction>
</comment>
<comment type="cofactor">
    <cofactor evidence="5">
        <name>Mg(2+)</name>
        <dbReference type="ChEBI" id="CHEBI:18420"/>
    </cofactor>
</comment>
<comment type="biophysicochemical properties">
    <kinetics>
        <KM evidence="5">1.2 uM for phosphatidylglycerophosphate</KM>
        <Vmax evidence="5">450.0 pmol/min/mg enzyme with phosphatidylglycerophosphate as substrate</Vmax>
    </kinetics>
    <phDependence>
        <text evidence="5">Optimum pH is 8.</text>
    </phDependence>
</comment>
<comment type="pathway">
    <text evidence="4 5">Phospholipid metabolism; phosphatidylglycerol biosynthesis; phosphatidylglycerol from CDP-diacylglycerol: step 2/2.</text>
</comment>
<comment type="subcellular location">
    <subcellularLocation>
        <location evidence="4 5 6">Plastid</location>
        <location evidence="4 5 6">Chloroplast</location>
    </subcellularLocation>
    <subcellularLocation>
        <location evidence="6">Mitochondrion</location>
    </subcellularLocation>
    <text evidence="6">Localized in chloroplast of leaf mesophyll cells, but in mitochondrion of root cells.</text>
</comment>
<comment type="alternative products">
    <event type="alternative splicing"/>
    <isoform>
        <id>Q9LXR9-1</id>
        <name>1</name>
        <sequence type="displayed"/>
    </isoform>
    <isoform>
        <id>Q9LXR9-2</id>
        <name>2</name>
        <sequence type="described" ref="VSP_060572"/>
    </isoform>
</comment>
<comment type="tissue specificity">
    <text evidence="4 5">Mainly expressed in inflorescences (especially in pollen) and, to a lower extent, in leaves, stems and siliques, as well as, at low levels, in roots (PubMed:27614107). Mostly expressed in hypocotyl, vasculatures, trichomes, guard cells and stigmas (PubMed:27541283).</text>
</comment>
<comment type="developmental stage">
    <text evidence="4">In the mature embryo, prominently expressed in the shoot apical meristem (SAM) (PubMed:27541283). In young seedlings, present in hypocotyls and mature part of roots, but not in root tips (PubMed:27541283). Later, also observed in the vasculature of cotyledons, in trichomes of emerging true leaves, and in joint part of the root to shoot (PubMed:27541283). In leaves, accumulates in guard cells and trichomes (PubMed:27541283). In flowers, mainly confined to the stigma of pistils and to the vasculature in the filament of stamens (PubMed:27541283).</text>
</comment>
<comment type="disruption phenotype">
    <text evidence="4 5 6">Pale green phenotype with reduced phosphatidylglycerol (PG) and chlorophyll contents but no defect in embryo development (PubMed:27541283, PubMed:27614107). Accumulation of phosphatidylglycerophosphate (PGP) 34:3, PGP 34:2 and PGP 34:1 lacking 16:1 (PubMed:27614107). Strongly reduced amounts of other thylakoid lipids such as monogalactosyldiacylglycerol (MGDG), digalactosyldiacylglycerol (DGDG) and sulfoquinovosyldiacylglycerol (SQDG), especially under phosphate deprivation conditions (-P) (PubMed:27614107). Reduced amounts of chlorophyll, but unchanged photosynthetic quantum yield (PubMed:27614107). Altered chloroplasts development (e.g. reduced number of thylakoid membranes) and impaired photosynthetic activity (PubMed:27541283, PubMed:27614107). Reduced mesophyll cells size (PubMed:27614107). Strongly shorter roots associated with a defective order of columella cells in the root apices (PubMed:29476828). Plants lacking PTPMT1, PTPMT2 and PGPP1 have strongly shorter roots associated with a defective order of columella cells in the root apices, with stronger effect than in the single mutant pgpp1-1 (PubMed:29476828).</text>
</comment>
<comment type="similarity">
    <text evidence="9">Belongs to the HAD-like hydrolase superfamily.</text>
</comment>
<keyword id="KW-0025">Alternative splicing</keyword>
<keyword id="KW-0150">Chloroplast</keyword>
<keyword id="KW-0378">Hydrolase</keyword>
<keyword id="KW-0444">Lipid biosynthesis</keyword>
<keyword id="KW-0443">Lipid metabolism</keyword>
<keyword id="KW-0496">Mitochondrion</keyword>
<keyword id="KW-0594">Phospholipid biosynthesis</keyword>
<keyword id="KW-1208">Phospholipid metabolism</keyword>
<keyword id="KW-0934">Plastid</keyword>
<keyword id="KW-1185">Reference proteome</keyword>
<keyword id="KW-0809">Transit peptide</keyword>
<dbReference type="EC" id="3.1.3.27" evidence="4 5"/>
<dbReference type="EMBL" id="AL353032">
    <property type="protein sequence ID" value="CAB88300.1"/>
    <property type="molecule type" value="Genomic_DNA"/>
</dbReference>
<dbReference type="EMBL" id="CP002686">
    <property type="protein sequence ID" value="AEE79837.1"/>
    <property type="molecule type" value="Genomic_DNA"/>
</dbReference>
<dbReference type="EMBL" id="CP002686">
    <property type="protein sequence ID" value="ANM64922.1"/>
    <property type="molecule type" value="Genomic_DNA"/>
</dbReference>
<dbReference type="EMBL" id="AK227892">
    <property type="protein sequence ID" value="BAE99864.1"/>
    <property type="molecule type" value="mRNA"/>
</dbReference>
<dbReference type="EMBL" id="BT004819">
    <property type="protein sequence ID" value="AAO44085.1"/>
    <property type="molecule type" value="mRNA"/>
</dbReference>
<dbReference type="PIR" id="T49166">
    <property type="entry name" value="T49166"/>
</dbReference>
<dbReference type="RefSeq" id="NP_001326923.1">
    <molecule id="Q9LXR9-1"/>
    <property type="nucleotide sequence ID" value="NM_001339940.1"/>
</dbReference>
<dbReference type="RefSeq" id="NP_191442.2">
    <molecule id="Q9LXR9-2"/>
    <property type="nucleotide sequence ID" value="NM_115745.4"/>
</dbReference>
<dbReference type="SMR" id="Q9LXR9"/>
<dbReference type="FunCoup" id="Q9LXR9">
    <property type="interactions" value="224"/>
</dbReference>
<dbReference type="STRING" id="3702.Q9LXR9"/>
<dbReference type="iPTMnet" id="Q9LXR9"/>
<dbReference type="PaxDb" id="3702-AT3G58830.1"/>
<dbReference type="ProteomicsDB" id="187736"/>
<dbReference type="EnsemblPlants" id="AT3G58830.1">
    <molecule id="Q9LXR9-2"/>
    <property type="protein sequence ID" value="AT3G58830.1"/>
    <property type="gene ID" value="AT3G58830"/>
</dbReference>
<dbReference type="EnsemblPlants" id="AT3G58830.2">
    <molecule id="Q9LXR9-1"/>
    <property type="protein sequence ID" value="AT3G58830.2"/>
    <property type="gene ID" value="AT3G58830"/>
</dbReference>
<dbReference type="GeneID" id="825052"/>
<dbReference type="Gramene" id="AT3G58830.1">
    <molecule id="Q9LXR9-2"/>
    <property type="protein sequence ID" value="AT3G58830.1"/>
    <property type="gene ID" value="AT3G58830"/>
</dbReference>
<dbReference type="Gramene" id="AT3G58830.2">
    <molecule id="Q9LXR9-1"/>
    <property type="protein sequence ID" value="AT3G58830.2"/>
    <property type="gene ID" value="AT3G58830"/>
</dbReference>
<dbReference type="KEGG" id="ath:AT3G58830"/>
<dbReference type="Araport" id="AT3G58830"/>
<dbReference type="TAIR" id="AT3G58830">
    <property type="gene designation" value="PGPP1"/>
</dbReference>
<dbReference type="eggNOG" id="KOG2961">
    <property type="taxonomic scope" value="Eukaryota"/>
</dbReference>
<dbReference type="HOGENOM" id="CLU_056221_0_0_1"/>
<dbReference type="InParanoid" id="Q9LXR9"/>
<dbReference type="OrthoDB" id="198652at2759"/>
<dbReference type="PhylomeDB" id="Q9LXR9"/>
<dbReference type="BRENDA" id="3.1.3.27">
    <property type="organism ID" value="399"/>
</dbReference>
<dbReference type="UniPathway" id="UPA00084">
    <property type="reaction ID" value="UER00504"/>
</dbReference>
<dbReference type="PRO" id="PR:Q9LXR9"/>
<dbReference type="Proteomes" id="UP000006548">
    <property type="component" value="Chromosome 3"/>
</dbReference>
<dbReference type="ExpressionAtlas" id="Q9LXR9">
    <property type="expression patterns" value="baseline and differential"/>
</dbReference>
<dbReference type="GO" id="GO:0009507">
    <property type="term" value="C:chloroplast"/>
    <property type="evidence" value="ECO:0000314"/>
    <property type="project" value="UniProtKB"/>
</dbReference>
<dbReference type="GO" id="GO:0005739">
    <property type="term" value="C:mitochondrion"/>
    <property type="evidence" value="ECO:0000314"/>
    <property type="project" value="UniProtKB"/>
</dbReference>
<dbReference type="GO" id="GO:0008962">
    <property type="term" value="F:phosphatidylglycerophosphatase activity"/>
    <property type="evidence" value="ECO:0000314"/>
    <property type="project" value="UniProtKB"/>
</dbReference>
<dbReference type="GO" id="GO:0009658">
    <property type="term" value="P:chloroplast organization"/>
    <property type="evidence" value="ECO:0000315"/>
    <property type="project" value="UniProtKB"/>
</dbReference>
<dbReference type="GO" id="GO:0046486">
    <property type="term" value="P:glycerolipid metabolic process"/>
    <property type="evidence" value="ECO:0000314"/>
    <property type="project" value="UniProtKB"/>
</dbReference>
<dbReference type="GO" id="GO:0008610">
    <property type="term" value="P:lipid biosynthetic process"/>
    <property type="evidence" value="ECO:0000315"/>
    <property type="project" value="TAIR"/>
</dbReference>
<dbReference type="GO" id="GO:0006655">
    <property type="term" value="P:phosphatidylglycerol biosynthetic process"/>
    <property type="evidence" value="ECO:0000315"/>
    <property type="project" value="TAIR"/>
</dbReference>
<dbReference type="GO" id="GO:0046839">
    <property type="term" value="P:phospholipid dephosphorylation"/>
    <property type="evidence" value="ECO:0000314"/>
    <property type="project" value="UniProtKB"/>
</dbReference>
<dbReference type="GO" id="GO:0015979">
    <property type="term" value="P:photosynthesis"/>
    <property type="evidence" value="ECO:0000315"/>
    <property type="project" value="UniProtKB"/>
</dbReference>
<dbReference type="GO" id="GO:0048364">
    <property type="term" value="P:root development"/>
    <property type="evidence" value="ECO:0000315"/>
    <property type="project" value="UniProtKB"/>
</dbReference>
<dbReference type="GO" id="GO:0010027">
    <property type="term" value="P:thylakoid membrane organization"/>
    <property type="evidence" value="ECO:0000315"/>
    <property type="project" value="UniProtKB"/>
</dbReference>
<dbReference type="FunFam" id="3.40.50.1000:FF:000148">
    <property type="entry name" value="Haloacid dehalogenase superfamily protein"/>
    <property type="match status" value="1"/>
</dbReference>
<dbReference type="Gene3D" id="3.40.50.1000">
    <property type="entry name" value="HAD superfamily/HAD-like"/>
    <property type="match status" value="1"/>
</dbReference>
<dbReference type="InterPro" id="IPR036412">
    <property type="entry name" value="HAD-like_sf"/>
</dbReference>
<dbReference type="InterPro" id="IPR006549">
    <property type="entry name" value="HAD-SF_hydro_IIIA"/>
</dbReference>
<dbReference type="InterPro" id="IPR023214">
    <property type="entry name" value="HAD_sf"/>
</dbReference>
<dbReference type="InterPro" id="IPR027706">
    <property type="entry name" value="PGP_Pase"/>
</dbReference>
<dbReference type="InterPro" id="IPR010021">
    <property type="entry name" value="PGPP1/Gep4"/>
</dbReference>
<dbReference type="NCBIfam" id="TIGR01662">
    <property type="entry name" value="HAD-SF-IIIA"/>
    <property type="match status" value="1"/>
</dbReference>
<dbReference type="NCBIfam" id="TIGR01668">
    <property type="entry name" value="YqeG_hyp_ppase"/>
    <property type="match status" value="1"/>
</dbReference>
<dbReference type="PANTHER" id="PTHR19288">
    <property type="entry name" value="4-NITROPHENYLPHOSPHATASE-RELATED"/>
    <property type="match status" value="1"/>
</dbReference>
<dbReference type="PANTHER" id="PTHR19288:SF25">
    <property type="entry name" value="PHOSPHATIDYLGLYCEROPHOSPHATASE GEP4, MITOCHONDRIAL"/>
    <property type="match status" value="1"/>
</dbReference>
<dbReference type="Pfam" id="PF09419">
    <property type="entry name" value="PGP_phosphatase"/>
    <property type="match status" value="1"/>
</dbReference>
<dbReference type="SUPFAM" id="SSF56784">
    <property type="entry name" value="HAD-like"/>
    <property type="match status" value="1"/>
</dbReference>
<protein>
    <recommendedName>
        <fullName evidence="7 8">Phosphatidylglycerophosphate phosphatase 1, chloroplastic/mitochondrial</fullName>
        <shortName evidence="7 8">AtPGPP1</shortName>
        <shortName evidence="7 8">PGP phosphatase 1</shortName>
        <ecNumber evidence="4 5">3.1.3.27</ecNumber>
    </recommendedName>
</protein>
<sequence length="348" mass="39094">MQTPSMAASTTSYYPIPKSFLLSPPRHKRNPNLISCSTKPICSPPPPSSSSSSPLQTTTTHRSQKQNLRLPTFEDSFLLYQFSSPTEDPGFSNRIPEQFDGEPRELVLPRVEDNNKGLAISSNMWWADLKAALGQRINIEGIVSSVSVVVKDRQFVLPHVSVKDLRYIDWEVLKRKGFKGVVFDKDNTLTAPYSLAIWPPLRPSIERCKAVFGHDIAVFSNSAGLTEYDHDDSKAKALEAEIGIRVLRHRVKKPAGTAEEVEKHFGCTSSELIMVGDRPFTDIVYGNRNGFLTVLTEPLSRAEEPFIVRQVRRLELALLKRWLRKGLKPVDHSLVSDITQFVKVPSDL</sequence>
<feature type="transit peptide" description="Chloroplast and mitochondrion" evidence="2">
    <location>
        <begin position="1"/>
        <end position="58"/>
    </location>
</feature>
<feature type="chain" id="PRO_0000449813" description="Phosphatidylglycerophosphate phosphatase 1, chloroplastic/mitochondrial">
    <location>
        <begin position="59"/>
        <end position="348"/>
    </location>
</feature>
<feature type="region of interest" description="Disordered" evidence="3">
    <location>
        <begin position="17"/>
        <end position="67"/>
    </location>
</feature>
<feature type="short sequence motif" description="Phosphoryl acceptor" evidence="1">
    <location>
        <begin position="184"/>
        <end position="188"/>
    </location>
</feature>
<feature type="compositionally biased region" description="Polar residues" evidence="3">
    <location>
        <begin position="55"/>
        <end position="67"/>
    </location>
</feature>
<feature type="site" description="Required for phosphatidylglycerophosphate phosphatase activity" evidence="5">
    <location>
        <position position="184"/>
    </location>
</feature>
<feature type="splice variant" id="VSP_060572" description="In isoform 2.">
    <location>
        <begin position="1"/>
        <end position="5"/>
    </location>
</feature>
<feature type="mutagenesis site" description="Disturbed phosphatidylglycerophosphate phosphatase activity." evidence="5">
    <original>D</original>
    <variation>N</variation>
    <location>
        <position position="184"/>
    </location>
</feature>
<evidence type="ECO:0000250" key="1">
    <source>
        <dbReference type="UniProtKB" id="P38812"/>
    </source>
</evidence>
<evidence type="ECO:0000255" key="2"/>
<evidence type="ECO:0000256" key="3">
    <source>
        <dbReference type="SAM" id="MobiDB-lite"/>
    </source>
</evidence>
<evidence type="ECO:0000269" key="4">
    <source>
    </source>
</evidence>
<evidence type="ECO:0000269" key="5">
    <source>
    </source>
</evidence>
<evidence type="ECO:0000269" key="6">
    <source>
    </source>
</evidence>
<evidence type="ECO:0000303" key="7">
    <source>
    </source>
</evidence>
<evidence type="ECO:0000303" key="8">
    <source>
    </source>
</evidence>
<evidence type="ECO:0000305" key="9"/>
<evidence type="ECO:0000312" key="10">
    <source>
        <dbReference type="Araport" id="AT3G58830"/>
    </source>
</evidence>
<evidence type="ECO:0000312" key="11">
    <source>
        <dbReference type="EMBL" id="CAB88300.1"/>
    </source>
</evidence>
<gene>
    <name evidence="7 8" type="primary">PGPP1</name>
    <name evidence="10" type="ordered locus">At3g58830</name>
    <name evidence="11" type="ORF">T20N10.180</name>
</gene>